<proteinExistence type="predicted"/>
<name>YMA6_CAEEL</name>
<accession>P34451</accession>
<protein>
    <recommendedName>
        <fullName>Uncharacterized protein F54F2.6</fullName>
    </recommendedName>
</protein>
<sequence length="71" mass="8546">MKHKRMMLPHYVRVYVCVRTDGENEKAGQSEEYDDDDKEENKKRRRNNGRRGPPEKKKSRRGGEEQTQRII</sequence>
<gene>
    <name type="ORF">F54F2.6</name>
</gene>
<keyword id="KW-1185">Reference proteome</keyword>
<reference key="1">
    <citation type="journal article" date="1994" name="Nature">
        <title>2.2 Mb of contiguous nucleotide sequence from chromosome III of C. elegans.</title>
        <authorList>
            <person name="Wilson R."/>
            <person name="Ainscough R."/>
            <person name="Anderson K."/>
            <person name="Baynes C."/>
            <person name="Berks M."/>
            <person name="Bonfield J."/>
            <person name="Burton J."/>
            <person name="Connell M."/>
            <person name="Copsey T."/>
            <person name="Cooper J."/>
            <person name="Coulson A."/>
            <person name="Craxton M."/>
            <person name="Dear S."/>
            <person name="Du Z."/>
            <person name="Durbin R."/>
            <person name="Favello A."/>
            <person name="Fraser A."/>
            <person name="Fulton L."/>
            <person name="Gardner A."/>
            <person name="Green P."/>
            <person name="Hawkins T."/>
            <person name="Hillier L."/>
            <person name="Jier M."/>
            <person name="Johnston L."/>
            <person name="Jones M."/>
            <person name="Kershaw J."/>
            <person name="Kirsten J."/>
            <person name="Laisster N."/>
            <person name="Latreille P."/>
            <person name="Lightning J."/>
            <person name="Lloyd C."/>
            <person name="Mortimore B."/>
            <person name="O'Callaghan M."/>
            <person name="Parsons J."/>
            <person name="Percy C."/>
            <person name="Rifken L."/>
            <person name="Roopra A."/>
            <person name="Saunders D."/>
            <person name="Shownkeen R."/>
            <person name="Sims M."/>
            <person name="Smaldon N."/>
            <person name="Smith A."/>
            <person name="Smith M."/>
            <person name="Sonnhammer E."/>
            <person name="Staden R."/>
            <person name="Sulston J."/>
            <person name="Thierry-Mieg J."/>
            <person name="Thomas K."/>
            <person name="Vaudin M."/>
            <person name="Vaughan K."/>
            <person name="Waterston R."/>
            <person name="Watson A."/>
            <person name="Weinstock L."/>
            <person name="Wilkinson-Sproat J."/>
            <person name="Wohldman P."/>
        </authorList>
    </citation>
    <scope>NUCLEOTIDE SEQUENCE [LARGE SCALE GENOMIC DNA]</scope>
    <source>
        <strain>Bristol N2</strain>
    </source>
</reference>
<reference key="2">
    <citation type="journal article" date="1998" name="Science">
        <title>Genome sequence of the nematode C. elegans: a platform for investigating biology.</title>
        <authorList>
            <consortium name="The C. elegans sequencing consortium"/>
        </authorList>
    </citation>
    <scope>NUCLEOTIDE SEQUENCE [LARGE SCALE GENOMIC DNA]</scope>
    <source>
        <strain>Bristol N2</strain>
    </source>
</reference>
<feature type="chain" id="PRO_0000065363" description="Uncharacterized protein F54F2.6">
    <location>
        <begin position="1"/>
        <end position="71"/>
    </location>
</feature>
<feature type="region of interest" description="Disordered" evidence="1">
    <location>
        <begin position="23"/>
        <end position="71"/>
    </location>
</feature>
<feature type="compositionally biased region" description="Basic and acidic residues" evidence="1">
    <location>
        <begin position="52"/>
        <end position="71"/>
    </location>
</feature>
<dbReference type="EMBL" id="FO081385">
    <property type="protein sequence ID" value="CCD71240.1"/>
    <property type="molecule type" value="Genomic_DNA"/>
</dbReference>
<dbReference type="RefSeq" id="NP_498945.1">
    <property type="nucleotide sequence ID" value="NM_066544.1"/>
</dbReference>
<dbReference type="SMR" id="P34451"/>
<dbReference type="STRING" id="6239.F54F2.6.1"/>
<dbReference type="PaxDb" id="6239-F54F2.6"/>
<dbReference type="EnsemblMetazoa" id="F54F2.6.1">
    <property type="protein sequence ID" value="F54F2.6.1"/>
    <property type="gene ID" value="WBGene00018834"/>
</dbReference>
<dbReference type="GeneID" id="186252"/>
<dbReference type="KEGG" id="cel:CELE_F54F2.6"/>
<dbReference type="UCSC" id="F54F2.6">
    <property type="organism name" value="c. elegans"/>
</dbReference>
<dbReference type="AGR" id="WB:WBGene00018834"/>
<dbReference type="CTD" id="186252"/>
<dbReference type="WormBase" id="F54F2.6">
    <property type="protein sequence ID" value="CE00199"/>
    <property type="gene ID" value="WBGene00018834"/>
</dbReference>
<dbReference type="HOGENOM" id="CLU_2742349_0_0_1"/>
<dbReference type="InParanoid" id="P34451"/>
<dbReference type="PRO" id="PR:P34451"/>
<dbReference type="Proteomes" id="UP000001940">
    <property type="component" value="Chromosome III"/>
</dbReference>
<dbReference type="Bgee" id="WBGene00018834">
    <property type="expression patterns" value="Expressed in pharyngeal muscle cell (C elegans) and 4 other cell types or tissues"/>
</dbReference>
<evidence type="ECO:0000256" key="1">
    <source>
        <dbReference type="SAM" id="MobiDB-lite"/>
    </source>
</evidence>
<organism>
    <name type="scientific">Caenorhabditis elegans</name>
    <dbReference type="NCBI Taxonomy" id="6239"/>
    <lineage>
        <taxon>Eukaryota</taxon>
        <taxon>Metazoa</taxon>
        <taxon>Ecdysozoa</taxon>
        <taxon>Nematoda</taxon>
        <taxon>Chromadorea</taxon>
        <taxon>Rhabditida</taxon>
        <taxon>Rhabditina</taxon>
        <taxon>Rhabditomorpha</taxon>
        <taxon>Rhabditoidea</taxon>
        <taxon>Rhabditidae</taxon>
        <taxon>Peloderinae</taxon>
        <taxon>Caenorhabditis</taxon>
    </lineage>
</organism>